<gene>
    <name type="primary">STS1</name>
    <name type="ORF">HPODL_03130</name>
</gene>
<comment type="function">
    <text evidence="1">Involved in ubiquitin-mediated protein degradation. Regulatory factor in the ubiquitin/proteasome pathway that controls the turnover of proteasome substrates. Targets proteasomes to the nucleus and facilitates the degradation of nuclear proteins (By similarity).</text>
</comment>
<comment type="subunit">
    <text evidence="1">Binds the proteasome.</text>
</comment>
<comment type="subcellular location">
    <subcellularLocation>
        <location evidence="1">Cytoplasm</location>
    </subcellularLocation>
    <subcellularLocation>
        <location evidence="1">Nucleus</location>
    </subcellularLocation>
</comment>
<comment type="similarity">
    <text evidence="3">Belongs to the cut8/STS1 family.</text>
</comment>
<accession>E7RAM2</accession>
<accession>W1Q7X3</accession>
<organism>
    <name type="scientific">Ogataea parapolymorpha (strain ATCC 26012 / BCRC 20466 / JCM 22074 / NRRL Y-7560 / DL-1)</name>
    <name type="common">Yeast</name>
    <name type="synonym">Hansenula polymorpha</name>
    <dbReference type="NCBI Taxonomy" id="871575"/>
    <lineage>
        <taxon>Eukaryota</taxon>
        <taxon>Fungi</taxon>
        <taxon>Dikarya</taxon>
        <taxon>Ascomycota</taxon>
        <taxon>Saccharomycotina</taxon>
        <taxon>Pichiomycetes</taxon>
        <taxon>Pichiales</taxon>
        <taxon>Pichiaceae</taxon>
        <taxon>Ogataea</taxon>
    </lineage>
</organism>
<dbReference type="EMBL" id="AEOI02000010">
    <property type="protein sequence ID" value="ESW96508.1"/>
    <property type="molecule type" value="Genomic_DNA"/>
</dbReference>
<dbReference type="RefSeq" id="XP_013932938.1">
    <property type="nucleotide sequence ID" value="XM_014077463.1"/>
</dbReference>
<dbReference type="SMR" id="E7RAM2"/>
<dbReference type="STRING" id="871575.E7RAM2"/>
<dbReference type="GeneID" id="25772575"/>
<dbReference type="KEGG" id="opa:HPODL_03130"/>
<dbReference type="eggNOG" id="ENOG502RNK4">
    <property type="taxonomic scope" value="Eukaryota"/>
</dbReference>
<dbReference type="HOGENOM" id="CLU_054606_0_0_1"/>
<dbReference type="OMA" id="HRTHAIM"/>
<dbReference type="OrthoDB" id="10061064at2759"/>
<dbReference type="Proteomes" id="UP000008673">
    <property type="component" value="Chromosome VII"/>
</dbReference>
<dbReference type="GO" id="GO:0005737">
    <property type="term" value="C:cytoplasm"/>
    <property type="evidence" value="ECO:0007669"/>
    <property type="project" value="UniProtKB-SubCell"/>
</dbReference>
<dbReference type="GO" id="GO:0031965">
    <property type="term" value="C:nuclear membrane"/>
    <property type="evidence" value="ECO:0007669"/>
    <property type="project" value="TreeGrafter"/>
</dbReference>
<dbReference type="GO" id="GO:0070628">
    <property type="term" value="F:proteasome binding"/>
    <property type="evidence" value="ECO:0007669"/>
    <property type="project" value="TreeGrafter"/>
</dbReference>
<dbReference type="GO" id="GO:0071630">
    <property type="term" value="P:nuclear protein quality control by the ubiquitin-proteasome system"/>
    <property type="evidence" value="ECO:0007669"/>
    <property type="project" value="InterPro"/>
</dbReference>
<dbReference type="GO" id="GO:0031144">
    <property type="term" value="P:proteasome localization"/>
    <property type="evidence" value="ECO:0007669"/>
    <property type="project" value="InterPro"/>
</dbReference>
<dbReference type="GO" id="GO:0015031">
    <property type="term" value="P:protein transport"/>
    <property type="evidence" value="ECO:0007669"/>
    <property type="project" value="UniProtKB-KW"/>
</dbReference>
<dbReference type="Gene3D" id="1.20.58.1590">
    <property type="entry name" value="Tethering factor for nuclear proteasome Cut8/Sts1"/>
    <property type="match status" value="1"/>
</dbReference>
<dbReference type="InterPro" id="IPR013868">
    <property type="entry name" value="Cut8/Sts1_fam"/>
</dbReference>
<dbReference type="InterPro" id="IPR038422">
    <property type="entry name" value="Cut8/Sts1_sf"/>
</dbReference>
<dbReference type="PANTHER" id="PTHR28032">
    <property type="entry name" value="FI02826P"/>
    <property type="match status" value="1"/>
</dbReference>
<dbReference type="PANTHER" id="PTHR28032:SF1">
    <property type="entry name" value="FI02826P"/>
    <property type="match status" value="1"/>
</dbReference>
<dbReference type="Pfam" id="PF08559">
    <property type="entry name" value="Cut8"/>
    <property type="match status" value="1"/>
</dbReference>
<protein>
    <recommendedName>
        <fullName>Tethering factor for nuclear proteasome STS1</fullName>
    </recommendedName>
</protein>
<sequence>MTLTNQMDFQNHFLAKDLHRITKPKKVGKRRHTDESNDEDASKPRFMPKTLSKLAQHKKQRQPQVMGQKLSVSRIIETLDQESLQNLISNLVSEHPEVAPTLLKISPQVTIEDSLMVLEQKLERILQNMPYRVDASSDYSFLRVKPHVEDFFQTLSDYTLNFLPPIESDLTVPLMFLMKFLAKCFPRLPKFHAVEYRYYHSLTVDKFNTILDDILVQFLSEKKHNIILAINQDWLTDFRKISELNDNNFSSVYERLKQEIDQYENPDAASGQPSTNNAGRLTGLANLLNFSSDNSPLHGNTVGNVFDTI</sequence>
<evidence type="ECO:0000250" key="1"/>
<evidence type="ECO:0000256" key="2">
    <source>
        <dbReference type="SAM" id="MobiDB-lite"/>
    </source>
</evidence>
<evidence type="ECO:0000305" key="3"/>
<reference key="1">
    <citation type="journal article" date="2013" name="BMC Genomics">
        <title>Genome sequence and analysis of methylotrophic yeast Hansenula polymorpha DL1.</title>
        <authorList>
            <person name="Ravin N.V."/>
            <person name="Eldarov M.A."/>
            <person name="Kadnikov V.V."/>
            <person name="Beletsky A.V."/>
            <person name="Schneider J."/>
            <person name="Mardanova E.S."/>
            <person name="Smekalova E.M."/>
            <person name="Zvereva M.I."/>
            <person name="Dontsova O.A."/>
            <person name="Mardanov A.V."/>
            <person name="Skryabin K.G."/>
        </authorList>
    </citation>
    <scope>NUCLEOTIDE SEQUENCE [LARGE SCALE GENOMIC DNA]</scope>
    <source>
        <strain>ATCC 26012 / BCRC 20466 / JCM 22074 / NRRL Y-7560 / DL-1</strain>
    </source>
</reference>
<proteinExistence type="inferred from homology"/>
<feature type="chain" id="PRO_0000409426" description="Tethering factor for nuclear proteasome STS1">
    <location>
        <begin position="1"/>
        <end position="309"/>
    </location>
</feature>
<feature type="region of interest" description="Disordered" evidence="2">
    <location>
        <begin position="20"/>
        <end position="45"/>
    </location>
</feature>
<feature type="compositionally biased region" description="Basic residues" evidence="2">
    <location>
        <begin position="21"/>
        <end position="31"/>
    </location>
</feature>
<feature type="compositionally biased region" description="Basic and acidic residues" evidence="2">
    <location>
        <begin position="32"/>
        <end position="43"/>
    </location>
</feature>
<keyword id="KW-0963">Cytoplasm</keyword>
<keyword id="KW-0539">Nucleus</keyword>
<keyword id="KW-0653">Protein transport</keyword>
<keyword id="KW-1185">Reference proteome</keyword>
<keyword id="KW-0813">Transport</keyword>
<name>STS1_OGAPD</name>